<dbReference type="EC" id="4.98.1.1" evidence="1"/>
<dbReference type="EMBL" id="CP001139">
    <property type="protein sequence ID" value="ACH65942.1"/>
    <property type="molecule type" value="Genomic_DNA"/>
</dbReference>
<dbReference type="RefSeq" id="WP_012533387.1">
    <property type="nucleotide sequence ID" value="NC_011184.1"/>
</dbReference>
<dbReference type="SMR" id="B5FBZ6"/>
<dbReference type="KEGG" id="vfm:VFMJ11_0831"/>
<dbReference type="HOGENOM" id="CLU_018884_0_0_6"/>
<dbReference type="UniPathway" id="UPA00252">
    <property type="reaction ID" value="UER00325"/>
</dbReference>
<dbReference type="Proteomes" id="UP000001857">
    <property type="component" value="Chromosome I"/>
</dbReference>
<dbReference type="GO" id="GO:0005737">
    <property type="term" value="C:cytoplasm"/>
    <property type="evidence" value="ECO:0007669"/>
    <property type="project" value="UniProtKB-SubCell"/>
</dbReference>
<dbReference type="GO" id="GO:0004325">
    <property type="term" value="F:ferrochelatase activity"/>
    <property type="evidence" value="ECO:0007669"/>
    <property type="project" value="UniProtKB-UniRule"/>
</dbReference>
<dbReference type="GO" id="GO:0046872">
    <property type="term" value="F:metal ion binding"/>
    <property type="evidence" value="ECO:0007669"/>
    <property type="project" value="UniProtKB-KW"/>
</dbReference>
<dbReference type="GO" id="GO:0006783">
    <property type="term" value="P:heme biosynthetic process"/>
    <property type="evidence" value="ECO:0007669"/>
    <property type="project" value="UniProtKB-UniRule"/>
</dbReference>
<dbReference type="CDD" id="cd00419">
    <property type="entry name" value="Ferrochelatase_C"/>
    <property type="match status" value="1"/>
</dbReference>
<dbReference type="CDD" id="cd03411">
    <property type="entry name" value="Ferrochelatase_N"/>
    <property type="match status" value="1"/>
</dbReference>
<dbReference type="FunFam" id="3.40.50.1400:FF:000002">
    <property type="entry name" value="Ferrochelatase"/>
    <property type="match status" value="1"/>
</dbReference>
<dbReference type="Gene3D" id="3.40.50.1400">
    <property type="match status" value="2"/>
</dbReference>
<dbReference type="HAMAP" id="MF_00323">
    <property type="entry name" value="Ferrochelatase"/>
    <property type="match status" value="1"/>
</dbReference>
<dbReference type="InterPro" id="IPR001015">
    <property type="entry name" value="Ferrochelatase"/>
</dbReference>
<dbReference type="InterPro" id="IPR019772">
    <property type="entry name" value="Ferrochelatase_AS"/>
</dbReference>
<dbReference type="InterPro" id="IPR033644">
    <property type="entry name" value="Ferrochelatase_C"/>
</dbReference>
<dbReference type="InterPro" id="IPR033659">
    <property type="entry name" value="Ferrochelatase_N"/>
</dbReference>
<dbReference type="NCBIfam" id="TIGR00109">
    <property type="entry name" value="hemH"/>
    <property type="match status" value="1"/>
</dbReference>
<dbReference type="PANTHER" id="PTHR11108">
    <property type="entry name" value="FERROCHELATASE"/>
    <property type="match status" value="1"/>
</dbReference>
<dbReference type="PANTHER" id="PTHR11108:SF1">
    <property type="entry name" value="FERROCHELATASE, MITOCHONDRIAL"/>
    <property type="match status" value="1"/>
</dbReference>
<dbReference type="Pfam" id="PF00762">
    <property type="entry name" value="Ferrochelatase"/>
    <property type="match status" value="1"/>
</dbReference>
<dbReference type="SUPFAM" id="SSF53800">
    <property type="entry name" value="Chelatase"/>
    <property type="match status" value="1"/>
</dbReference>
<dbReference type="PROSITE" id="PS00534">
    <property type="entry name" value="FERROCHELATASE"/>
    <property type="match status" value="1"/>
</dbReference>
<sequence length="322" mass="36450">MNNKKTGVLLVNLGTPTAPTAAAVKQFLSEFLHDKRVVDMNRFIWCPLLHGVILPIRAPKVAKLYESVWMEDGSPLLVYSQRQVKALEARLSMPVALGMTYGEPRIKSGIESLEQQGCDEIIILPLYPQYSRTTTAAVFDQIAKQYKTTPVLPNFTMIHNYHDHPLYIKALANSVRQSWERNGKGDYVLCSYHGIPQRFVDNGDIYATHCERTTELLAQELGLTSEQIGMSYQSRFGREEWLQPYTSETLKVLAPKGIKSLDIISPAFSSDCLETLEELSEECKEIFMESGGQKYTFIPCLNDDELHIEMMADIVSSKIFNK</sequence>
<accession>B5FBZ6</accession>
<comment type="function">
    <text evidence="1">Catalyzes the ferrous insertion into protoporphyrin IX.</text>
</comment>
<comment type="catalytic activity">
    <reaction evidence="1">
        <text>heme b + 2 H(+) = protoporphyrin IX + Fe(2+)</text>
        <dbReference type="Rhea" id="RHEA:22584"/>
        <dbReference type="ChEBI" id="CHEBI:15378"/>
        <dbReference type="ChEBI" id="CHEBI:29033"/>
        <dbReference type="ChEBI" id="CHEBI:57306"/>
        <dbReference type="ChEBI" id="CHEBI:60344"/>
        <dbReference type="EC" id="4.98.1.1"/>
    </reaction>
</comment>
<comment type="pathway">
    <text evidence="1">Porphyrin-containing compound metabolism; protoheme biosynthesis; protoheme from protoporphyrin-IX: step 1/1.</text>
</comment>
<comment type="subcellular location">
    <subcellularLocation>
        <location evidence="1">Cytoplasm</location>
    </subcellularLocation>
</comment>
<comment type="similarity">
    <text evidence="1">Belongs to the ferrochelatase family.</text>
</comment>
<name>HEMH_ALIFM</name>
<keyword id="KW-0963">Cytoplasm</keyword>
<keyword id="KW-0350">Heme biosynthesis</keyword>
<keyword id="KW-0408">Iron</keyword>
<keyword id="KW-0456">Lyase</keyword>
<keyword id="KW-0479">Metal-binding</keyword>
<keyword id="KW-0627">Porphyrin biosynthesis</keyword>
<organism>
    <name type="scientific">Aliivibrio fischeri (strain MJ11)</name>
    <name type="common">Vibrio fischeri</name>
    <dbReference type="NCBI Taxonomy" id="388396"/>
    <lineage>
        <taxon>Bacteria</taxon>
        <taxon>Pseudomonadati</taxon>
        <taxon>Pseudomonadota</taxon>
        <taxon>Gammaproteobacteria</taxon>
        <taxon>Vibrionales</taxon>
        <taxon>Vibrionaceae</taxon>
        <taxon>Aliivibrio</taxon>
    </lineage>
</organism>
<gene>
    <name evidence="1" type="primary">hemH</name>
    <name type="ordered locus">VFMJ11_0831</name>
</gene>
<protein>
    <recommendedName>
        <fullName evidence="1">Ferrochelatase</fullName>
        <ecNumber evidence="1">4.98.1.1</ecNumber>
    </recommendedName>
    <alternativeName>
        <fullName evidence="1">Heme synthase</fullName>
    </alternativeName>
    <alternativeName>
        <fullName evidence="1">Protoheme ferro-lyase</fullName>
    </alternativeName>
</protein>
<proteinExistence type="inferred from homology"/>
<reference key="1">
    <citation type="submission" date="2008-08" db="EMBL/GenBank/DDBJ databases">
        <title>Complete sequence of Vibrio fischeri strain MJ11.</title>
        <authorList>
            <person name="Mandel M.J."/>
            <person name="Stabb E.V."/>
            <person name="Ruby E.G."/>
            <person name="Ferriera S."/>
            <person name="Johnson J."/>
            <person name="Kravitz S."/>
            <person name="Beeson K."/>
            <person name="Sutton G."/>
            <person name="Rogers Y.-H."/>
            <person name="Friedman R."/>
            <person name="Frazier M."/>
            <person name="Venter J.C."/>
        </authorList>
    </citation>
    <scope>NUCLEOTIDE SEQUENCE [LARGE SCALE GENOMIC DNA]</scope>
    <source>
        <strain>MJ11</strain>
    </source>
</reference>
<evidence type="ECO:0000255" key="1">
    <source>
        <dbReference type="HAMAP-Rule" id="MF_00323"/>
    </source>
</evidence>
<feature type="chain" id="PRO_1000116088" description="Ferrochelatase">
    <location>
        <begin position="1"/>
        <end position="322"/>
    </location>
</feature>
<feature type="binding site" evidence="1">
    <location>
        <position position="193"/>
    </location>
    <ligand>
        <name>Fe cation</name>
        <dbReference type="ChEBI" id="CHEBI:24875"/>
    </ligand>
</feature>
<feature type="binding site" evidence="1">
    <location>
        <position position="274"/>
    </location>
    <ligand>
        <name>Fe cation</name>
        <dbReference type="ChEBI" id="CHEBI:24875"/>
    </ligand>
</feature>